<sequence>MERKRYIFGNWKMHKTAKEAKDYLSVFCPLLEEVAPVSCVGITPAFTALHACCESIKFFHSPLWLGAQNVHQDTSGAFTGEISLPMLKEFDVNFVLLGHSECRHIFHEEDTTIALKVGAAAREGIIPVLCIGETLEVREKGATEAMLSNQLMLGLAQLPETASVIIAYEPVWAIGTGKVASAVDVQEAHAFCREVLANIFSKEKAEEISILYGGSVKADNAEGFARCPDVDGLLVGGASLDPKVFADVVANFHR</sequence>
<protein>
    <recommendedName>
        <fullName evidence="1">Triosephosphate isomerase</fullName>
        <shortName evidence="1">TIM</shortName>
        <shortName evidence="1">TPI</shortName>
        <ecNumber evidence="1">5.3.1.1</ecNumber>
    </recommendedName>
    <alternativeName>
        <fullName evidence="1">Triose-phosphate isomerase</fullName>
    </alternativeName>
</protein>
<dbReference type="EC" id="5.3.1.1" evidence="1"/>
<dbReference type="EMBL" id="CR848038">
    <property type="protein sequence ID" value="CAH63755.1"/>
    <property type="molecule type" value="Genomic_DNA"/>
</dbReference>
<dbReference type="RefSeq" id="WP_006343954.1">
    <property type="nucleotide sequence ID" value="NC_004552.2"/>
</dbReference>
<dbReference type="SMR" id="Q5L6H0"/>
<dbReference type="GeneID" id="93024860"/>
<dbReference type="KEGG" id="cab:CAB305"/>
<dbReference type="eggNOG" id="COG0149">
    <property type="taxonomic scope" value="Bacteria"/>
</dbReference>
<dbReference type="HOGENOM" id="CLU_024251_2_1_0"/>
<dbReference type="OrthoDB" id="9809429at2"/>
<dbReference type="UniPathway" id="UPA00109">
    <property type="reaction ID" value="UER00189"/>
</dbReference>
<dbReference type="UniPathway" id="UPA00138"/>
<dbReference type="Proteomes" id="UP000001012">
    <property type="component" value="Chromosome"/>
</dbReference>
<dbReference type="GO" id="GO:0005829">
    <property type="term" value="C:cytosol"/>
    <property type="evidence" value="ECO:0007669"/>
    <property type="project" value="TreeGrafter"/>
</dbReference>
<dbReference type="GO" id="GO:0004807">
    <property type="term" value="F:triose-phosphate isomerase activity"/>
    <property type="evidence" value="ECO:0007669"/>
    <property type="project" value="UniProtKB-UniRule"/>
</dbReference>
<dbReference type="GO" id="GO:0006094">
    <property type="term" value="P:gluconeogenesis"/>
    <property type="evidence" value="ECO:0007669"/>
    <property type="project" value="UniProtKB-UniRule"/>
</dbReference>
<dbReference type="GO" id="GO:0046166">
    <property type="term" value="P:glyceraldehyde-3-phosphate biosynthetic process"/>
    <property type="evidence" value="ECO:0007669"/>
    <property type="project" value="TreeGrafter"/>
</dbReference>
<dbReference type="GO" id="GO:0019563">
    <property type="term" value="P:glycerol catabolic process"/>
    <property type="evidence" value="ECO:0007669"/>
    <property type="project" value="TreeGrafter"/>
</dbReference>
<dbReference type="GO" id="GO:0006096">
    <property type="term" value="P:glycolytic process"/>
    <property type="evidence" value="ECO:0007669"/>
    <property type="project" value="UniProtKB-UniRule"/>
</dbReference>
<dbReference type="CDD" id="cd00311">
    <property type="entry name" value="TIM"/>
    <property type="match status" value="1"/>
</dbReference>
<dbReference type="FunFam" id="3.20.20.70:FF:000016">
    <property type="entry name" value="Triosephosphate isomerase"/>
    <property type="match status" value="1"/>
</dbReference>
<dbReference type="Gene3D" id="3.20.20.70">
    <property type="entry name" value="Aldolase class I"/>
    <property type="match status" value="1"/>
</dbReference>
<dbReference type="HAMAP" id="MF_00147_B">
    <property type="entry name" value="TIM_B"/>
    <property type="match status" value="1"/>
</dbReference>
<dbReference type="InterPro" id="IPR013785">
    <property type="entry name" value="Aldolase_TIM"/>
</dbReference>
<dbReference type="InterPro" id="IPR035990">
    <property type="entry name" value="TIM_sf"/>
</dbReference>
<dbReference type="InterPro" id="IPR022896">
    <property type="entry name" value="TrioseP_Isoase_bac/euk"/>
</dbReference>
<dbReference type="InterPro" id="IPR000652">
    <property type="entry name" value="Triosephosphate_isomerase"/>
</dbReference>
<dbReference type="InterPro" id="IPR020861">
    <property type="entry name" value="Triosephosphate_isomerase_AS"/>
</dbReference>
<dbReference type="NCBIfam" id="TIGR00419">
    <property type="entry name" value="tim"/>
    <property type="match status" value="1"/>
</dbReference>
<dbReference type="PANTHER" id="PTHR21139">
    <property type="entry name" value="TRIOSEPHOSPHATE ISOMERASE"/>
    <property type="match status" value="1"/>
</dbReference>
<dbReference type="PANTHER" id="PTHR21139:SF42">
    <property type="entry name" value="TRIOSEPHOSPHATE ISOMERASE"/>
    <property type="match status" value="1"/>
</dbReference>
<dbReference type="Pfam" id="PF00121">
    <property type="entry name" value="TIM"/>
    <property type="match status" value="1"/>
</dbReference>
<dbReference type="SUPFAM" id="SSF51351">
    <property type="entry name" value="Triosephosphate isomerase (TIM)"/>
    <property type="match status" value="1"/>
</dbReference>
<dbReference type="PROSITE" id="PS00171">
    <property type="entry name" value="TIM_1"/>
    <property type="match status" value="1"/>
</dbReference>
<dbReference type="PROSITE" id="PS51440">
    <property type="entry name" value="TIM_2"/>
    <property type="match status" value="1"/>
</dbReference>
<reference key="1">
    <citation type="journal article" date="2005" name="Genome Res.">
        <title>The Chlamydophila abortus genome sequence reveals an array of variable proteins that contribute to interspecies variation.</title>
        <authorList>
            <person name="Thomson N.R."/>
            <person name="Yeats C."/>
            <person name="Bell K."/>
            <person name="Holden M.T.G."/>
            <person name="Bentley S.D."/>
            <person name="Livingstone M."/>
            <person name="Cerdeno-Tarraga A.-M."/>
            <person name="Harris B."/>
            <person name="Doggett J."/>
            <person name="Ormond D."/>
            <person name="Mungall K."/>
            <person name="Clarke K."/>
            <person name="Feltwell T."/>
            <person name="Hance Z."/>
            <person name="Sanders M."/>
            <person name="Quail M.A."/>
            <person name="Price C."/>
            <person name="Barrell B.G."/>
            <person name="Parkhill J."/>
            <person name="Longbottom D."/>
        </authorList>
    </citation>
    <scope>NUCLEOTIDE SEQUENCE [LARGE SCALE GENOMIC DNA]</scope>
    <source>
        <strain>DSM 27085 / S26/3</strain>
    </source>
</reference>
<accession>Q5L6H0</accession>
<gene>
    <name evidence="1" type="primary">tpiA</name>
    <name type="ordered locus">CAB305</name>
</gene>
<evidence type="ECO:0000255" key="1">
    <source>
        <dbReference type="HAMAP-Rule" id="MF_00147"/>
    </source>
</evidence>
<feature type="chain" id="PRO_0000307445" description="Triosephosphate isomerase">
    <location>
        <begin position="1"/>
        <end position="254"/>
    </location>
</feature>
<feature type="active site" description="Electrophile" evidence="1">
    <location>
        <position position="99"/>
    </location>
</feature>
<feature type="active site" description="Proton acceptor" evidence="1">
    <location>
        <position position="169"/>
    </location>
</feature>
<feature type="binding site" evidence="1">
    <location>
        <begin position="10"/>
        <end position="12"/>
    </location>
    <ligand>
        <name>substrate</name>
    </ligand>
</feature>
<feature type="binding site" evidence="1">
    <location>
        <position position="175"/>
    </location>
    <ligand>
        <name>substrate</name>
    </ligand>
</feature>
<feature type="binding site" evidence="1">
    <location>
        <position position="215"/>
    </location>
    <ligand>
        <name>substrate</name>
    </ligand>
</feature>
<feature type="binding site" evidence="1">
    <location>
        <begin position="236"/>
        <end position="237"/>
    </location>
    <ligand>
        <name>substrate</name>
    </ligand>
</feature>
<proteinExistence type="inferred from homology"/>
<keyword id="KW-0963">Cytoplasm</keyword>
<keyword id="KW-0312">Gluconeogenesis</keyword>
<keyword id="KW-0324">Glycolysis</keyword>
<keyword id="KW-0413">Isomerase</keyword>
<comment type="function">
    <text evidence="1">Involved in the gluconeogenesis. Catalyzes stereospecifically the conversion of dihydroxyacetone phosphate (DHAP) to D-glyceraldehyde-3-phosphate (G3P).</text>
</comment>
<comment type="catalytic activity">
    <reaction evidence="1">
        <text>D-glyceraldehyde 3-phosphate = dihydroxyacetone phosphate</text>
        <dbReference type="Rhea" id="RHEA:18585"/>
        <dbReference type="ChEBI" id="CHEBI:57642"/>
        <dbReference type="ChEBI" id="CHEBI:59776"/>
        <dbReference type="EC" id="5.3.1.1"/>
    </reaction>
</comment>
<comment type="pathway">
    <text evidence="1">Carbohydrate biosynthesis; gluconeogenesis.</text>
</comment>
<comment type="pathway">
    <text evidence="1">Carbohydrate degradation; glycolysis; D-glyceraldehyde 3-phosphate from glycerone phosphate: step 1/1.</text>
</comment>
<comment type="subunit">
    <text evidence="1">Homodimer.</text>
</comment>
<comment type="subcellular location">
    <subcellularLocation>
        <location evidence="1">Cytoplasm</location>
    </subcellularLocation>
</comment>
<comment type="similarity">
    <text evidence="1">Belongs to the triosephosphate isomerase family.</text>
</comment>
<organism>
    <name type="scientific">Chlamydia abortus (strain DSM 27085 / S26/3)</name>
    <name type="common">Chlamydophila abortus</name>
    <dbReference type="NCBI Taxonomy" id="218497"/>
    <lineage>
        <taxon>Bacteria</taxon>
        <taxon>Pseudomonadati</taxon>
        <taxon>Chlamydiota</taxon>
        <taxon>Chlamydiia</taxon>
        <taxon>Chlamydiales</taxon>
        <taxon>Chlamydiaceae</taxon>
        <taxon>Chlamydia/Chlamydophila group</taxon>
        <taxon>Chlamydia</taxon>
    </lineage>
</organism>
<name>TPIS_CHLAB</name>